<sequence length="150" mass="17804">MNTNTLLLENKKAKFNYFIEEKVSCGIVLKGTEVKSIKAKKLSFNNSFASIKKEEFWLENLHVSKYKEGNIFNHDELRPRKLLIKKQELQRLKKFKEKEGYTLIPISFYLKKSIIKVEVGICKGKKLYDKREILKQKSIKKDLSREIKYK</sequence>
<keyword id="KW-0963">Cytoplasm</keyword>
<keyword id="KW-0694">RNA-binding</keyword>
<reference key="1">
    <citation type="journal article" date="2004" name="Nucleic Acids Res.">
        <title>Comparative analysis of the Borrelia garinii genome.</title>
        <authorList>
            <person name="Gloeckner G."/>
            <person name="Lehmann R."/>
            <person name="Romualdi A."/>
            <person name="Pradella S."/>
            <person name="Schulte-Spechtel U."/>
            <person name="Schilhabel M."/>
            <person name="Wilske B."/>
            <person name="Suehnel J."/>
            <person name="Platzer M."/>
        </authorList>
    </citation>
    <scope>NUCLEOTIDE SEQUENCE [LARGE SCALE GENOMIC DNA]</scope>
    <source>
        <strain>ATCC BAA-2496 / DSM 23469 / PBi</strain>
    </source>
</reference>
<gene>
    <name evidence="1" type="primary">smpB</name>
    <name type="ordered locus">BG0033</name>
</gene>
<protein>
    <recommendedName>
        <fullName evidence="1">SsrA-binding protein</fullName>
    </recommendedName>
    <alternativeName>
        <fullName evidence="1">Small protein B</fullName>
    </alternativeName>
</protein>
<comment type="function">
    <text evidence="1">Required for rescue of stalled ribosomes mediated by trans-translation. Binds to transfer-messenger RNA (tmRNA), required for stable association of tmRNA with ribosomes. tmRNA and SmpB together mimic tRNA shape, replacing the anticodon stem-loop with SmpB. tmRNA is encoded by the ssrA gene; the 2 termini fold to resemble tRNA(Ala) and it encodes a 'tag peptide', a short internal open reading frame. During trans-translation Ala-aminoacylated tmRNA acts like a tRNA, entering the A-site of stalled ribosomes, displacing the stalled mRNA. The ribosome then switches to translate the ORF on the tmRNA; the nascent peptide is terminated with the 'tag peptide' encoded by the tmRNA and targeted for degradation. The ribosome is freed to recommence translation, which seems to be the essential function of trans-translation.</text>
</comment>
<comment type="subcellular location">
    <subcellularLocation>
        <location evidence="1">Cytoplasm</location>
    </subcellularLocation>
    <text evidence="1">The tmRNA-SmpB complex associates with stalled 70S ribosomes.</text>
</comment>
<comment type="similarity">
    <text evidence="1">Belongs to the SmpB family.</text>
</comment>
<evidence type="ECO:0000255" key="1">
    <source>
        <dbReference type="HAMAP-Rule" id="MF_00023"/>
    </source>
</evidence>
<name>SSRP_BORGP</name>
<dbReference type="EMBL" id="CP000013">
    <property type="protein sequence ID" value="AAU06892.1"/>
    <property type="molecule type" value="Genomic_DNA"/>
</dbReference>
<dbReference type="RefSeq" id="WP_011193387.1">
    <property type="nucleotide sequence ID" value="NZ_CP028872.1"/>
</dbReference>
<dbReference type="SMR" id="Q662X9"/>
<dbReference type="GeneID" id="45160832"/>
<dbReference type="KEGG" id="bga:BG0033"/>
<dbReference type="eggNOG" id="COG0691">
    <property type="taxonomic scope" value="Bacteria"/>
</dbReference>
<dbReference type="HOGENOM" id="CLU_108953_0_0_12"/>
<dbReference type="OrthoDB" id="9805462at2"/>
<dbReference type="Proteomes" id="UP000002276">
    <property type="component" value="Chromosome"/>
</dbReference>
<dbReference type="GO" id="GO:0005829">
    <property type="term" value="C:cytosol"/>
    <property type="evidence" value="ECO:0007669"/>
    <property type="project" value="TreeGrafter"/>
</dbReference>
<dbReference type="GO" id="GO:0003723">
    <property type="term" value="F:RNA binding"/>
    <property type="evidence" value="ECO:0007669"/>
    <property type="project" value="UniProtKB-UniRule"/>
</dbReference>
<dbReference type="GO" id="GO:0070929">
    <property type="term" value="P:trans-translation"/>
    <property type="evidence" value="ECO:0007669"/>
    <property type="project" value="UniProtKB-UniRule"/>
</dbReference>
<dbReference type="CDD" id="cd09294">
    <property type="entry name" value="SmpB"/>
    <property type="match status" value="1"/>
</dbReference>
<dbReference type="Gene3D" id="2.40.280.10">
    <property type="match status" value="1"/>
</dbReference>
<dbReference type="HAMAP" id="MF_00023">
    <property type="entry name" value="SmpB"/>
    <property type="match status" value="1"/>
</dbReference>
<dbReference type="InterPro" id="IPR023620">
    <property type="entry name" value="SmpB"/>
</dbReference>
<dbReference type="InterPro" id="IPR000037">
    <property type="entry name" value="SsrA-bd_prot"/>
</dbReference>
<dbReference type="InterPro" id="IPR020081">
    <property type="entry name" value="SsrA-bd_prot_CS"/>
</dbReference>
<dbReference type="NCBIfam" id="NF003843">
    <property type="entry name" value="PRK05422.1"/>
    <property type="match status" value="1"/>
</dbReference>
<dbReference type="NCBIfam" id="TIGR00086">
    <property type="entry name" value="smpB"/>
    <property type="match status" value="1"/>
</dbReference>
<dbReference type="PANTHER" id="PTHR30308:SF2">
    <property type="entry name" value="SSRA-BINDING PROTEIN"/>
    <property type="match status" value="1"/>
</dbReference>
<dbReference type="PANTHER" id="PTHR30308">
    <property type="entry name" value="TMRNA-BINDING COMPONENT OF TRANS-TRANSLATION TAGGING COMPLEX"/>
    <property type="match status" value="1"/>
</dbReference>
<dbReference type="Pfam" id="PF01668">
    <property type="entry name" value="SmpB"/>
    <property type="match status" value="1"/>
</dbReference>
<dbReference type="SUPFAM" id="SSF74982">
    <property type="entry name" value="Small protein B (SmpB)"/>
    <property type="match status" value="1"/>
</dbReference>
<dbReference type="PROSITE" id="PS01317">
    <property type="entry name" value="SSRP"/>
    <property type="match status" value="1"/>
</dbReference>
<accession>Q662X9</accession>
<organism>
    <name type="scientific">Borrelia garinii subsp. bavariensis (strain ATCC BAA-2496 / DSM 23469 / PBi)</name>
    <name type="common">Borreliella bavariensis</name>
    <dbReference type="NCBI Taxonomy" id="290434"/>
    <lineage>
        <taxon>Bacteria</taxon>
        <taxon>Pseudomonadati</taxon>
        <taxon>Spirochaetota</taxon>
        <taxon>Spirochaetia</taxon>
        <taxon>Spirochaetales</taxon>
        <taxon>Borreliaceae</taxon>
        <taxon>Borreliella</taxon>
    </lineage>
</organism>
<proteinExistence type="inferred from homology"/>
<feature type="chain" id="PRO_0000102914" description="SsrA-binding protein">
    <location>
        <begin position="1"/>
        <end position="150"/>
    </location>
</feature>